<sequence>MSDDMIYKEAIAAEVLQVTGRTGVTGEIFQVRCKILGGKDTGRILTRNIKGPIKVGDIIMLRETEREAKALGRRR</sequence>
<organism>
    <name type="scientific">Methanococcus aeolicus (strain ATCC BAA-1280 / DSM 17508 / OCM 812 / Nankai-3)</name>
    <dbReference type="NCBI Taxonomy" id="419665"/>
    <lineage>
        <taxon>Archaea</taxon>
        <taxon>Methanobacteriati</taxon>
        <taxon>Methanobacteriota</taxon>
        <taxon>Methanomada group</taxon>
        <taxon>Methanococci</taxon>
        <taxon>Methanococcales</taxon>
        <taxon>Methanococcaceae</taxon>
        <taxon>Methanococcus</taxon>
    </lineage>
</organism>
<accession>A6UT50</accession>
<comment type="similarity">
    <text evidence="1">Belongs to the eukaryotic ribosomal protein eS28 family.</text>
</comment>
<protein>
    <recommendedName>
        <fullName evidence="1">Small ribosomal subunit protein eS28</fullName>
    </recommendedName>
    <alternativeName>
        <fullName evidence="2">30S ribosomal protein S28e</fullName>
    </alternativeName>
</protein>
<evidence type="ECO:0000255" key="1">
    <source>
        <dbReference type="HAMAP-Rule" id="MF_00292"/>
    </source>
</evidence>
<evidence type="ECO:0000305" key="2"/>
<name>RS28_META3</name>
<dbReference type="EMBL" id="CP000743">
    <property type="protein sequence ID" value="ABR55672.1"/>
    <property type="molecule type" value="Genomic_DNA"/>
</dbReference>
<dbReference type="RefSeq" id="WP_011972804.1">
    <property type="nucleotide sequence ID" value="NC_009635.1"/>
</dbReference>
<dbReference type="SMR" id="A6UT50"/>
<dbReference type="STRING" id="419665.Maeo_0080"/>
<dbReference type="GeneID" id="5326630"/>
<dbReference type="KEGG" id="mae:Maeo_0080"/>
<dbReference type="eggNOG" id="arCOG04314">
    <property type="taxonomic scope" value="Archaea"/>
</dbReference>
<dbReference type="HOGENOM" id="CLU_178987_2_1_2"/>
<dbReference type="OrthoDB" id="7620at2157"/>
<dbReference type="Proteomes" id="UP000001106">
    <property type="component" value="Chromosome"/>
</dbReference>
<dbReference type="GO" id="GO:0022627">
    <property type="term" value="C:cytosolic small ribosomal subunit"/>
    <property type="evidence" value="ECO:0007669"/>
    <property type="project" value="TreeGrafter"/>
</dbReference>
<dbReference type="GO" id="GO:0003735">
    <property type="term" value="F:structural constituent of ribosome"/>
    <property type="evidence" value="ECO:0007669"/>
    <property type="project" value="InterPro"/>
</dbReference>
<dbReference type="GO" id="GO:0030490">
    <property type="term" value="P:maturation of SSU-rRNA"/>
    <property type="evidence" value="ECO:0007669"/>
    <property type="project" value="TreeGrafter"/>
</dbReference>
<dbReference type="GO" id="GO:0000028">
    <property type="term" value="P:ribosomal small subunit assembly"/>
    <property type="evidence" value="ECO:0007669"/>
    <property type="project" value="TreeGrafter"/>
</dbReference>
<dbReference type="GO" id="GO:0006412">
    <property type="term" value="P:translation"/>
    <property type="evidence" value="ECO:0007669"/>
    <property type="project" value="UniProtKB-UniRule"/>
</dbReference>
<dbReference type="FunFam" id="2.40.50.140:FF:000145">
    <property type="entry name" value="30S ribosomal protein S28e"/>
    <property type="match status" value="1"/>
</dbReference>
<dbReference type="Gene3D" id="2.40.50.140">
    <property type="entry name" value="Nucleic acid-binding proteins"/>
    <property type="match status" value="1"/>
</dbReference>
<dbReference type="HAMAP" id="MF_00292">
    <property type="entry name" value="Ribosomal_eS28"/>
    <property type="match status" value="1"/>
</dbReference>
<dbReference type="InterPro" id="IPR012340">
    <property type="entry name" value="NA-bd_OB-fold"/>
</dbReference>
<dbReference type="InterPro" id="IPR000289">
    <property type="entry name" value="Ribosomal_eS28"/>
</dbReference>
<dbReference type="InterPro" id="IPR028626">
    <property type="entry name" value="Ribosomal_eS28_CS"/>
</dbReference>
<dbReference type="NCBIfam" id="NF003080">
    <property type="entry name" value="PRK04007.1"/>
    <property type="match status" value="1"/>
</dbReference>
<dbReference type="PANTHER" id="PTHR10769">
    <property type="entry name" value="40S RIBOSOMAL PROTEIN S28"/>
    <property type="match status" value="1"/>
</dbReference>
<dbReference type="PANTHER" id="PTHR10769:SF3">
    <property type="entry name" value="SMALL RIBOSOMAL SUBUNIT PROTEIN ES28"/>
    <property type="match status" value="1"/>
</dbReference>
<dbReference type="Pfam" id="PF01200">
    <property type="entry name" value="Ribosomal_S28e"/>
    <property type="match status" value="1"/>
</dbReference>
<dbReference type="SUPFAM" id="SSF50249">
    <property type="entry name" value="Nucleic acid-binding proteins"/>
    <property type="match status" value="1"/>
</dbReference>
<dbReference type="PROSITE" id="PS00961">
    <property type="entry name" value="RIBOSOMAL_S28E"/>
    <property type="match status" value="1"/>
</dbReference>
<reference key="1">
    <citation type="submission" date="2007-06" db="EMBL/GenBank/DDBJ databases">
        <title>Complete sequence of Methanococcus aeolicus Nankai-3.</title>
        <authorList>
            <consortium name="US DOE Joint Genome Institute"/>
            <person name="Copeland A."/>
            <person name="Lucas S."/>
            <person name="Lapidus A."/>
            <person name="Barry K."/>
            <person name="Glavina del Rio T."/>
            <person name="Dalin E."/>
            <person name="Tice H."/>
            <person name="Pitluck S."/>
            <person name="Chain P."/>
            <person name="Malfatti S."/>
            <person name="Shin M."/>
            <person name="Vergez L."/>
            <person name="Schmutz J."/>
            <person name="Larimer F."/>
            <person name="Land M."/>
            <person name="Hauser L."/>
            <person name="Kyrpides N."/>
            <person name="Lykidis A."/>
            <person name="Sieprawska-Lupa M."/>
            <person name="Whitman W.B."/>
            <person name="Richardson P."/>
        </authorList>
    </citation>
    <scope>NUCLEOTIDE SEQUENCE [LARGE SCALE GENOMIC DNA]</scope>
    <source>
        <strain>ATCC BAA-1280 / DSM 17508 / OCM 812 / Nankai-3</strain>
    </source>
</reference>
<keyword id="KW-0687">Ribonucleoprotein</keyword>
<keyword id="KW-0689">Ribosomal protein</keyword>
<proteinExistence type="inferred from homology"/>
<gene>
    <name evidence="1" type="primary">rps28e</name>
    <name type="ordered locus">Maeo_0080</name>
</gene>
<feature type="chain" id="PRO_1000004120" description="Small ribosomal subunit protein eS28">
    <location>
        <begin position="1"/>
        <end position="75"/>
    </location>
</feature>